<feature type="chain" id="PRO_0000384755" description="Ribosome maturation factor RimP">
    <location>
        <begin position="1"/>
        <end position="219"/>
    </location>
</feature>
<feature type="region of interest" description="Disordered" evidence="2">
    <location>
        <begin position="1"/>
        <end position="38"/>
    </location>
</feature>
<feature type="region of interest" description="Disordered" evidence="2">
    <location>
        <begin position="189"/>
        <end position="219"/>
    </location>
</feature>
<feature type="compositionally biased region" description="Acidic residues" evidence="2">
    <location>
        <begin position="198"/>
        <end position="219"/>
    </location>
</feature>
<keyword id="KW-0963">Cytoplasm</keyword>
<keyword id="KW-0690">Ribosome biogenesis</keyword>
<evidence type="ECO:0000255" key="1">
    <source>
        <dbReference type="HAMAP-Rule" id="MF_01077"/>
    </source>
</evidence>
<evidence type="ECO:0000256" key="2">
    <source>
        <dbReference type="SAM" id="MobiDB-lite"/>
    </source>
</evidence>
<name>RIMP_SALAI</name>
<dbReference type="EMBL" id="CP000850">
    <property type="protein sequence ID" value="ABV97225.1"/>
    <property type="molecule type" value="Genomic_DNA"/>
</dbReference>
<dbReference type="SMR" id="A8M743"/>
<dbReference type="STRING" id="391037.Sare_1324"/>
<dbReference type="KEGG" id="saq:Sare_1324"/>
<dbReference type="PATRIC" id="fig|391037.6.peg.1346"/>
<dbReference type="eggNOG" id="COG0779">
    <property type="taxonomic scope" value="Bacteria"/>
</dbReference>
<dbReference type="HOGENOM" id="CLU_070525_3_0_11"/>
<dbReference type="OrthoDB" id="9805006at2"/>
<dbReference type="GO" id="GO:0005829">
    <property type="term" value="C:cytosol"/>
    <property type="evidence" value="ECO:0007669"/>
    <property type="project" value="TreeGrafter"/>
</dbReference>
<dbReference type="GO" id="GO:0000028">
    <property type="term" value="P:ribosomal small subunit assembly"/>
    <property type="evidence" value="ECO:0007669"/>
    <property type="project" value="TreeGrafter"/>
</dbReference>
<dbReference type="GO" id="GO:0006412">
    <property type="term" value="P:translation"/>
    <property type="evidence" value="ECO:0007669"/>
    <property type="project" value="TreeGrafter"/>
</dbReference>
<dbReference type="CDD" id="cd01734">
    <property type="entry name" value="YlxS_C"/>
    <property type="match status" value="1"/>
</dbReference>
<dbReference type="Gene3D" id="3.30.300.70">
    <property type="entry name" value="RimP-like superfamily, N-terminal"/>
    <property type="match status" value="1"/>
</dbReference>
<dbReference type="HAMAP" id="MF_01077">
    <property type="entry name" value="RimP"/>
    <property type="match status" value="1"/>
</dbReference>
<dbReference type="InterPro" id="IPR003728">
    <property type="entry name" value="Ribosome_maturation_RimP"/>
</dbReference>
<dbReference type="InterPro" id="IPR028998">
    <property type="entry name" value="RimP_C"/>
</dbReference>
<dbReference type="InterPro" id="IPR028989">
    <property type="entry name" value="RimP_N"/>
</dbReference>
<dbReference type="InterPro" id="IPR035956">
    <property type="entry name" value="RimP_N_sf"/>
</dbReference>
<dbReference type="NCBIfam" id="NF000930">
    <property type="entry name" value="PRK00092.2-2"/>
    <property type="match status" value="1"/>
</dbReference>
<dbReference type="PANTHER" id="PTHR33867">
    <property type="entry name" value="RIBOSOME MATURATION FACTOR RIMP"/>
    <property type="match status" value="1"/>
</dbReference>
<dbReference type="PANTHER" id="PTHR33867:SF1">
    <property type="entry name" value="RIBOSOME MATURATION FACTOR RIMP"/>
    <property type="match status" value="1"/>
</dbReference>
<dbReference type="Pfam" id="PF02576">
    <property type="entry name" value="RimP_N"/>
    <property type="match status" value="1"/>
</dbReference>
<dbReference type="SUPFAM" id="SSF75420">
    <property type="entry name" value="YhbC-like, N-terminal domain"/>
    <property type="match status" value="1"/>
</dbReference>
<gene>
    <name evidence="1" type="primary">rimP</name>
    <name type="ordered locus">Sare_1324</name>
</gene>
<sequence length="219" mass="23637">MTQRGRAAKPTGPTGRPRRTGGQRGTDRVGRGGDLATRRARLHQVVEPVVQGAGYDLEDLSVSRAGRRHVVQVIVDADGGVDLDAVADVSRAVSAALDAAEEVGGDIVAGEYQLEVSSPGVARPLTLPRHWRRNTGRLVRFTVRGGPEAVDRQVTGRVVEADDERVVVETDAGRTEWRHAELGPGRVQVEFTRPGEPDAFDGTDEAGDFDDDDVEDEER</sequence>
<comment type="function">
    <text evidence="1">Required for maturation of 30S ribosomal subunits.</text>
</comment>
<comment type="subcellular location">
    <subcellularLocation>
        <location evidence="1">Cytoplasm</location>
    </subcellularLocation>
</comment>
<comment type="similarity">
    <text evidence="1">Belongs to the RimP family.</text>
</comment>
<accession>A8M743</accession>
<reference key="1">
    <citation type="submission" date="2007-10" db="EMBL/GenBank/DDBJ databases">
        <title>Complete sequence of Salinispora arenicola CNS-205.</title>
        <authorList>
            <consortium name="US DOE Joint Genome Institute"/>
            <person name="Copeland A."/>
            <person name="Lucas S."/>
            <person name="Lapidus A."/>
            <person name="Barry K."/>
            <person name="Glavina del Rio T."/>
            <person name="Dalin E."/>
            <person name="Tice H."/>
            <person name="Pitluck S."/>
            <person name="Foster B."/>
            <person name="Schmutz J."/>
            <person name="Larimer F."/>
            <person name="Land M."/>
            <person name="Hauser L."/>
            <person name="Kyrpides N."/>
            <person name="Ivanova N."/>
            <person name="Jensen P.R."/>
            <person name="Moore B.S."/>
            <person name="Penn K."/>
            <person name="Jenkins C."/>
            <person name="Udwary D."/>
            <person name="Xiang L."/>
            <person name="Gontang E."/>
            <person name="Richardson P."/>
        </authorList>
    </citation>
    <scope>NUCLEOTIDE SEQUENCE [LARGE SCALE GENOMIC DNA]</scope>
    <source>
        <strain>CNS-205</strain>
    </source>
</reference>
<organism>
    <name type="scientific">Salinispora arenicola (strain CNS-205)</name>
    <dbReference type="NCBI Taxonomy" id="391037"/>
    <lineage>
        <taxon>Bacteria</taxon>
        <taxon>Bacillati</taxon>
        <taxon>Actinomycetota</taxon>
        <taxon>Actinomycetes</taxon>
        <taxon>Micromonosporales</taxon>
        <taxon>Micromonosporaceae</taxon>
        <taxon>Salinispora</taxon>
    </lineage>
</organism>
<protein>
    <recommendedName>
        <fullName evidence="1">Ribosome maturation factor RimP</fullName>
    </recommendedName>
</protein>
<proteinExistence type="inferred from homology"/>